<accession>Q9NH03</accession>
<accession>Q54XP0</accession>
<proteinExistence type="evidence at transcript level"/>
<sequence length="382" mass="43590">MNNQSLQRAAMISEHLAPTSELNMNQTSAPIKTAKEELADFVEIFPILTNEILKELPGMDMPPQTIAWVEKMINVNVSGGKMNRGLTVLHSLQLLVEGRQLSRSEIFLANVLGWCVEWLQAFFLVADDIMDQSITRRGQPCWYRQANPISNNGTIGSIAINDSFILESCIYILIKKYFRNEPYYADILDIFHETSYQTELGQLLDLTTQPNRGDFSLFTLNTYRRIVKYKTAYYSFYLPVALAMLMAGITSTPAFSTAKDILLPMGEFFQVQDDFLDCYGSPAVIGKIGRDIEENKCSWMICQAILNGTPEQINLLKKHYGLDNPTDVELVKKIYGEIGLKKIFKDYEDESYAFLISKIKSVRIMPQEVFIKLLSKIYKRDL</sequence>
<name>FPS_DICDI</name>
<organism>
    <name type="scientific">Dictyostelium discoideum</name>
    <name type="common">Social amoeba</name>
    <dbReference type="NCBI Taxonomy" id="44689"/>
    <lineage>
        <taxon>Eukaryota</taxon>
        <taxon>Amoebozoa</taxon>
        <taxon>Evosea</taxon>
        <taxon>Eumycetozoa</taxon>
        <taxon>Dictyostelia</taxon>
        <taxon>Dictyosteliales</taxon>
        <taxon>Dictyosteliaceae</taxon>
        <taxon>Dictyostelium</taxon>
    </lineage>
</organism>
<evidence type="ECO:0000250" key="1"/>
<evidence type="ECO:0000250" key="2">
    <source>
        <dbReference type="UniProtKB" id="P14324"/>
    </source>
</evidence>
<evidence type="ECO:0000269" key="3">
    <source>
    </source>
</evidence>
<evidence type="ECO:0000269" key="4">
    <source>
    </source>
</evidence>
<evidence type="ECO:0000305" key="5"/>
<comment type="function">
    <text evidence="3">Key enzyme in isoprenoid biosynthesis which catalyzes the formation of farnesyl diphosphate (FPP), a sterol precursor. Involved in the inhibition of cell growth.</text>
</comment>
<comment type="catalytic activity">
    <reaction>
        <text>isopentenyl diphosphate + dimethylallyl diphosphate = (2E)-geranyl diphosphate + diphosphate</text>
        <dbReference type="Rhea" id="RHEA:22408"/>
        <dbReference type="ChEBI" id="CHEBI:33019"/>
        <dbReference type="ChEBI" id="CHEBI:57623"/>
        <dbReference type="ChEBI" id="CHEBI:58057"/>
        <dbReference type="ChEBI" id="CHEBI:128769"/>
        <dbReference type="EC" id="2.5.1.1"/>
    </reaction>
</comment>
<comment type="catalytic activity">
    <reaction>
        <text>isopentenyl diphosphate + (2E)-geranyl diphosphate = (2E,6E)-farnesyl diphosphate + diphosphate</text>
        <dbReference type="Rhea" id="RHEA:19361"/>
        <dbReference type="ChEBI" id="CHEBI:33019"/>
        <dbReference type="ChEBI" id="CHEBI:58057"/>
        <dbReference type="ChEBI" id="CHEBI:128769"/>
        <dbReference type="ChEBI" id="CHEBI:175763"/>
        <dbReference type="EC" id="2.5.1.10"/>
    </reaction>
</comment>
<comment type="cofactor">
    <cofactor evidence="1">
        <name>Mg(2+)</name>
        <dbReference type="ChEBI" id="CHEBI:18420"/>
    </cofactor>
    <text evidence="1">Binds 2 Mg(2+) ions per subunit.</text>
</comment>
<comment type="activity regulation">
    <text evidence="3 4">Inhibited by aminobisphosphonate drugs (aBP), such as risedronate and alendronate.</text>
</comment>
<comment type="pathway">
    <text>Isoprenoid biosynthesis; farnesyl diphosphate biosynthesis; farnesyl diphosphate from geranyl diphosphate and isopentenyl diphosphate: step 1/1.</text>
</comment>
<comment type="pathway">
    <text>Isoprenoid biosynthesis; geranyl diphosphate biosynthesis; geranyl diphosphate from dimethylallyl diphosphate and isopentenyl diphosphate: step 1/1.</text>
</comment>
<comment type="subcellular location">
    <subcellularLocation>
        <location evidence="5">Cytoplasm</location>
    </subcellularLocation>
</comment>
<comment type="similarity">
    <text evidence="5">Belongs to the FPP/GGPP synthase family.</text>
</comment>
<feature type="chain" id="PRO_0000393337" description="Farnesyl diphosphate synthase">
    <location>
        <begin position="1"/>
        <end position="382"/>
    </location>
</feature>
<feature type="binding site" evidence="2">
    <location>
        <position position="81"/>
    </location>
    <ligand>
        <name>isopentenyl diphosphate</name>
        <dbReference type="ChEBI" id="CHEBI:128769"/>
    </ligand>
</feature>
<feature type="binding site" evidence="2">
    <location>
        <position position="84"/>
    </location>
    <ligand>
        <name>isopentenyl diphosphate</name>
        <dbReference type="ChEBI" id="CHEBI:128769"/>
    </ligand>
</feature>
<feature type="binding site" evidence="2">
    <location>
        <position position="120"/>
    </location>
    <ligand>
        <name>isopentenyl diphosphate</name>
        <dbReference type="ChEBI" id="CHEBI:128769"/>
    </ligand>
</feature>
<feature type="binding site" evidence="2">
    <location>
        <position position="127"/>
    </location>
    <ligand>
        <name>Mg(2+)</name>
        <dbReference type="ChEBI" id="CHEBI:18420"/>
        <label>1</label>
    </ligand>
</feature>
<feature type="binding site" evidence="2">
    <location>
        <position position="127"/>
    </location>
    <ligand>
        <name>Mg(2+)</name>
        <dbReference type="ChEBI" id="CHEBI:18420"/>
        <label>2</label>
    </ligand>
</feature>
<feature type="binding site" evidence="2">
    <location>
        <position position="131"/>
    </location>
    <ligand>
        <name>Mg(2+)</name>
        <dbReference type="ChEBI" id="CHEBI:18420"/>
        <label>1</label>
    </ligand>
</feature>
<feature type="binding site" evidence="2">
    <location>
        <position position="131"/>
    </location>
    <ligand>
        <name>Mg(2+)</name>
        <dbReference type="ChEBI" id="CHEBI:18420"/>
        <label>2</label>
    </ligand>
</feature>
<feature type="binding site" evidence="1">
    <location>
        <position position="136"/>
    </location>
    <ligand>
        <name>dimethylallyl diphosphate</name>
        <dbReference type="ChEBI" id="CHEBI:57623"/>
    </ligand>
</feature>
<feature type="binding site" evidence="2">
    <location>
        <position position="137"/>
    </location>
    <ligand>
        <name>isopentenyl diphosphate</name>
        <dbReference type="ChEBI" id="CHEBI:128769"/>
    </ligand>
</feature>
<feature type="binding site" evidence="1">
    <location>
        <position position="230"/>
    </location>
    <ligand>
        <name>dimethylallyl diphosphate</name>
        <dbReference type="ChEBI" id="CHEBI:57623"/>
    </ligand>
</feature>
<feature type="binding site" evidence="1">
    <location>
        <position position="231"/>
    </location>
    <ligand>
        <name>dimethylallyl diphosphate</name>
        <dbReference type="ChEBI" id="CHEBI:57623"/>
    </ligand>
</feature>
<feature type="binding site" evidence="1">
    <location>
        <position position="270"/>
    </location>
    <ligand>
        <name>dimethylallyl diphosphate</name>
        <dbReference type="ChEBI" id="CHEBI:57623"/>
    </ligand>
</feature>
<feature type="binding site" evidence="1">
    <location>
        <position position="287"/>
    </location>
    <ligand>
        <name>dimethylallyl diphosphate</name>
        <dbReference type="ChEBI" id="CHEBI:57623"/>
    </ligand>
</feature>
<feature type="binding site" evidence="1">
    <location>
        <position position="296"/>
    </location>
    <ligand>
        <name>dimethylallyl diphosphate</name>
        <dbReference type="ChEBI" id="CHEBI:57623"/>
    </ligand>
</feature>
<dbReference type="EC" id="2.5.1.10"/>
<dbReference type="EC" id="2.5.1.1"/>
<dbReference type="EMBL" id="AF234168">
    <property type="protein sequence ID" value="AAF37872.1"/>
    <property type="molecule type" value="mRNA"/>
</dbReference>
<dbReference type="EMBL" id="AAFI02000024">
    <property type="protein sequence ID" value="EAL67969.1"/>
    <property type="molecule type" value="Genomic_DNA"/>
</dbReference>
<dbReference type="RefSeq" id="XP_641990.1">
    <property type="nucleotide sequence ID" value="XM_636898.1"/>
</dbReference>
<dbReference type="SMR" id="Q9NH03"/>
<dbReference type="FunCoup" id="Q9NH03">
    <property type="interactions" value="773"/>
</dbReference>
<dbReference type="STRING" id="44689.Q9NH03"/>
<dbReference type="PaxDb" id="44689-DDB0215017"/>
<dbReference type="EnsemblProtists" id="EAL67969">
    <property type="protein sequence ID" value="EAL67969"/>
    <property type="gene ID" value="DDB_G0278735"/>
</dbReference>
<dbReference type="GeneID" id="8621722"/>
<dbReference type="KEGG" id="ddi:DDB_G0278735"/>
<dbReference type="dictyBase" id="DDB_G0278735">
    <property type="gene designation" value="fps"/>
</dbReference>
<dbReference type="VEuPathDB" id="AmoebaDB:DDB_G0278735"/>
<dbReference type="eggNOG" id="KOG0711">
    <property type="taxonomic scope" value="Eukaryota"/>
</dbReference>
<dbReference type="HOGENOM" id="CLU_028376_0_1_1"/>
<dbReference type="InParanoid" id="Q9NH03"/>
<dbReference type="OMA" id="CSWVVNQ"/>
<dbReference type="PhylomeDB" id="Q9NH03"/>
<dbReference type="Reactome" id="R-DDI-191273">
    <property type="pathway name" value="Cholesterol biosynthesis"/>
</dbReference>
<dbReference type="UniPathway" id="UPA00259">
    <property type="reaction ID" value="UER00368"/>
</dbReference>
<dbReference type="UniPathway" id="UPA00260">
    <property type="reaction ID" value="UER00369"/>
</dbReference>
<dbReference type="PRO" id="PR:Q9NH03"/>
<dbReference type="Proteomes" id="UP000002195">
    <property type="component" value="Chromosome 3"/>
</dbReference>
<dbReference type="GO" id="GO:0005737">
    <property type="term" value="C:cytoplasm"/>
    <property type="evidence" value="ECO:0000318"/>
    <property type="project" value="GO_Central"/>
</dbReference>
<dbReference type="GO" id="GO:0005777">
    <property type="term" value="C:peroxisome"/>
    <property type="evidence" value="ECO:0000314"/>
    <property type="project" value="dictyBase"/>
</dbReference>
<dbReference type="GO" id="GO:0004337">
    <property type="term" value="F:(2E,6E)-farnesyl diphosphate synthase activity"/>
    <property type="evidence" value="ECO:0000250"/>
    <property type="project" value="dictyBase"/>
</dbReference>
<dbReference type="GO" id="GO:0004161">
    <property type="term" value="F:dimethylallyltranstransferase activity"/>
    <property type="evidence" value="ECO:0000318"/>
    <property type="project" value="GO_Central"/>
</dbReference>
<dbReference type="GO" id="GO:0046872">
    <property type="term" value="F:metal ion binding"/>
    <property type="evidence" value="ECO:0007669"/>
    <property type="project" value="UniProtKB-KW"/>
</dbReference>
<dbReference type="GO" id="GO:0006695">
    <property type="term" value="P:cholesterol biosynthetic process"/>
    <property type="evidence" value="ECO:0007669"/>
    <property type="project" value="UniProtKB-KW"/>
</dbReference>
<dbReference type="GO" id="GO:0045337">
    <property type="term" value="P:farnesyl diphosphate biosynthetic process"/>
    <property type="evidence" value="ECO:0000250"/>
    <property type="project" value="dictyBase"/>
</dbReference>
<dbReference type="GO" id="GO:0033384">
    <property type="term" value="P:geranyl diphosphate biosynthetic process"/>
    <property type="evidence" value="ECO:0007669"/>
    <property type="project" value="UniProtKB-UniPathway"/>
</dbReference>
<dbReference type="GO" id="GO:0009410">
    <property type="term" value="P:response to xenobiotic stimulus"/>
    <property type="evidence" value="ECO:0000314"/>
    <property type="project" value="dictyBase"/>
</dbReference>
<dbReference type="CDD" id="cd00685">
    <property type="entry name" value="Trans_IPPS_HT"/>
    <property type="match status" value="1"/>
</dbReference>
<dbReference type="FunFam" id="1.10.600.10:FF:000008">
    <property type="entry name" value="Farnesyl pyrophosphate synthase"/>
    <property type="match status" value="1"/>
</dbReference>
<dbReference type="Gene3D" id="1.10.600.10">
    <property type="entry name" value="Farnesyl Diphosphate Synthase"/>
    <property type="match status" value="1"/>
</dbReference>
<dbReference type="InterPro" id="IPR039702">
    <property type="entry name" value="FPS1-like"/>
</dbReference>
<dbReference type="InterPro" id="IPR008949">
    <property type="entry name" value="Isoprenoid_synthase_dom_sf"/>
</dbReference>
<dbReference type="InterPro" id="IPR000092">
    <property type="entry name" value="Polyprenyl_synt"/>
</dbReference>
<dbReference type="InterPro" id="IPR033749">
    <property type="entry name" value="Polyprenyl_synt_CS"/>
</dbReference>
<dbReference type="PANTHER" id="PTHR11525:SF0">
    <property type="entry name" value="FARNESYL PYROPHOSPHATE SYNTHASE"/>
    <property type="match status" value="1"/>
</dbReference>
<dbReference type="PANTHER" id="PTHR11525">
    <property type="entry name" value="FARNESYL-PYROPHOSPHATE SYNTHETASE"/>
    <property type="match status" value="1"/>
</dbReference>
<dbReference type="Pfam" id="PF00348">
    <property type="entry name" value="polyprenyl_synt"/>
    <property type="match status" value="1"/>
</dbReference>
<dbReference type="SFLD" id="SFLDS00005">
    <property type="entry name" value="Isoprenoid_Synthase_Type_I"/>
    <property type="match status" value="1"/>
</dbReference>
<dbReference type="SFLD" id="SFLDG01017">
    <property type="entry name" value="Polyprenyl_Transferase_Like"/>
    <property type="match status" value="1"/>
</dbReference>
<dbReference type="SUPFAM" id="SSF48576">
    <property type="entry name" value="Terpenoid synthases"/>
    <property type="match status" value="1"/>
</dbReference>
<dbReference type="PROSITE" id="PS00723">
    <property type="entry name" value="POLYPRENYL_SYNTHASE_1"/>
    <property type="match status" value="1"/>
</dbReference>
<dbReference type="PROSITE" id="PS00444">
    <property type="entry name" value="POLYPRENYL_SYNTHASE_2"/>
    <property type="match status" value="1"/>
</dbReference>
<reference key="1">
    <citation type="journal article" date="2000" name="J. Bone Miner. Res.">
        <title>The intracellular target for the antiresorptive aminobisphosphonate drugs in Dictyostelium discoideum is the enzyme farnesyl diphosphate synthase.</title>
        <authorList>
            <person name="Grove J.E."/>
            <person name="Brown R.J."/>
            <person name="Watts D.J."/>
        </authorList>
    </citation>
    <scope>NUCLEOTIDE SEQUENCE [MRNA]</scope>
    <scope>ACTIVITY REGULATION</scope>
    <scope>FUNCTION</scope>
</reference>
<reference key="2">
    <citation type="journal article" date="2005" name="Nature">
        <title>The genome of the social amoeba Dictyostelium discoideum.</title>
        <authorList>
            <person name="Eichinger L."/>
            <person name="Pachebat J.A."/>
            <person name="Gloeckner G."/>
            <person name="Rajandream M.A."/>
            <person name="Sucgang R."/>
            <person name="Berriman M."/>
            <person name="Song J."/>
            <person name="Olsen R."/>
            <person name="Szafranski K."/>
            <person name="Xu Q."/>
            <person name="Tunggal B."/>
            <person name="Kummerfeld S."/>
            <person name="Madera M."/>
            <person name="Konfortov B.A."/>
            <person name="Rivero F."/>
            <person name="Bankier A.T."/>
            <person name="Lehmann R."/>
            <person name="Hamlin N."/>
            <person name="Davies R."/>
            <person name="Gaudet P."/>
            <person name="Fey P."/>
            <person name="Pilcher K."/>
            <person name="Chen G."/>
            <person name="Saunders D."/>
            <person name="Sodergren E.J."/>
            <person name="Davis P."/>
            <person name="Kerhornou A."/>
            <person name="Nie X."/>
            <person name="Hall N."/>
            <person name="Anjard C."/>
            <person name="Hemphill L."/>
            <person name="Bason N."/>
            <person name="Farbrother P."/>
            <person name="Desany B."/>
            <person name="Just E."/>
            <person name="Morio T."/>
            <person name="Rost R."/>
            <person name="Churcher C.M."/>
            <person name="Cooper J."/>
            <person name="Haydock S."/>
            <person name="van Driessche N."/>
            <person name="Cronin A."/>
            <person name="Goodhead I."/>
            <person name="Muzny D.M."/>
            <person name="Mourier T."/>
            <person name="Pain A."/>
            <person name="Lu M."/>
            <person name="Harper D."/>
            <person name="Lindsay R."/>
            <person name="Hauser H."/>
            <person name="James K.D."/>
            <person name="Quiles M."/>
            <person name="Madan Babu M."/>
            <person name="Saito T."/>
            <person name="Buchrieser C."/>
            <person name="Wardroper A."/>
            <person name="Felder M."/>
            <person name="Thangavelu M."/>
            <person name="Johnson D."/>
            <person name="Knights A."/>
            <person name="Loulseged H."/>
            <person name="Mungall K.L."/>
            <person name="Oliver K."/>
            <person name="Price C."/>
            <person name="Quail M.A."/>
            <person name="Urushihara H."/>
            <person name="Hernandez J."/>
            <person name="Rabbinowitsch E."/>
            <person name="Steffen D."/>
            <person name="Sanders M."/>
            <person name="Ma J."/>
            <person name="Kohara Y."/>
            <person name="Sharp S."/>
            <person name="Simmonds M.N."/>
            <person name="Spiegler S."/>
            <person name="Tivey A."/>
            <person name="Sugano S."/>
            <person name="White B."/>
            <person name="Walker D."/>
            <person name="Woodward J.R."/>
            <person name="Winckler T."/>
            <person name="Tanaka Y."/>
            <person name="Shaulsky G."/>
            <person name="Schleicher M."/>
            <person name="Weinstock G.M."/>
            <person name="Rosenthal A."/>
            <person name="Cox E.C."/>
            <person name="Chisholm R.L."/>
            <person name="Gibbs R.A."/>
            <person name="Loomis W.F."/>
            <person name="Platzer M."/>
            <person name="Kay R.R."/>
            <person name="Williams J.G."/>
            <person name="Dear P.H."/>
            <person name="Noegel A.A."/>
            <person name="Barrell B.G."/>
            <person name="Kuspa A."/>
        </authorList>
    </citation>
    <scope>NUCLEOTIDE SEQUENCE [LARGE SCALE GENOMIC DNA]</scope>
    <source>
        <strain>AX4</strain>
    </source>
</reference>
<reference key="3">
    <citation type="journal article" date="2002" name="J. Med. Chem.">
        <title>An investigation of bone resorption and Dictyostelium discoideum growth inhibition by bisphosphonate drugs.</title>
        <authorList>
            <person name="Szabo C.M."/>
            <person name="Martin M.B."/>
            <person name="Oldfield E."/>
        </authorList>
    </citation>
    <scope>ACTIVITY REGULATION</scope>
</reference>
<protein>
    <recommendedName>
        <fullName>Farnesyl diphosphate synthase</fullName>
        <shortName>Dfps</shortName>
        <ecNumber>2.5.1.10</ecNumber>
    </recommendedName>
    <alternativeName>
        <fullName>(2E,6E)-farnesyl diphosphate synthase</fullName>
    </alternativeName>
    <alternativeName>
        <fullName>Dimethylallyltranstransferase</fullName>
        <ecNumber>2.5.1.1</ecNumber>
    </alternativeName>
    <alternativeName>
        <fullName>Geranyltranstransferase</fullName>
    </alternativeName>
</protein>
<keyword id="KW-0152">Cholesterol biosynthesis</keyword>
<keyword id="KW-0153">Cholesterol metabolism</keyword>
<keyword id="KW-0963">Cytoplasm</keyword>
<keyword id="KW-0414">Isoprene biosynthesis</keyword>
<keyword id="KW-0444">Lipid biosynthesis</keyword>
<keyword id="KW-0443">Lipid metabolism</keyword>
<keyword id="KW-0460">Magnesium</keyword>
<keyword id="KW-0479">Metal-binding</keyword>
<keyword id="KW-1185">Reference proteome</keyword>
<keyword id="KW-0752">Steroid biosynthesis</keyword>
<keyword id="KW-0753">Steroid metabolism</keyword>
<keyword id="KW-0756">Sterol biosynthesis</keyword>
<keyword id="KW-1207">Sterol metabolism</keyword>
<keyword id="KW-0808">Transferase</keyword>
<gene>
    <name type="primary">fps</name>
    <name type="ORF">DDB_G0278735</name>
</gene>